<reference key="1">
    <citation type="submission" date="2004-11" db="EMBL/GenBank/DDBJ databases">
        <authorList>
            <consortium name="The German cDNA consortium"/>
        </authorList>
    </citation>
    <scope>NUCLEOTIDE SEQUENCE [LARGE SCALE MRNA]</scope>
    <source>
        <tissue>Brain cortex</tissue>
        <tissue>Heart</tissue>
    </source>
</reference>
<organism>
    <name type="scientific">Pongo abelii</name>
    <name type="common">Sumatran orangutan</name>
    <name type="synonym">Pongo pygmaeus abelii</name>
    <dbReference type="NCBI Taxonomy" id="9601"/>
    <lineage>
        <taxon>Eukaryota</taxon>
        <taxon>Metazoa</taxon>
        <taxon>Chordata</taxon>
        <taxon>Craniata</taxon>
        <taxon>Vertebrata</taxon>
        <taxon>Euteleostomi</taxon>
        <taxon>Mammalia</taxon>
        <taxon>Eutheria</taxon>
        <taxon>Euarchontoglires</taxon>
        <taxon>Primates</taxon>
        <taxon>Haplorrhini</taxon>
        <taxon>Catarrhini</taxon>
        <taxon>Hominidae</taxon>
        <taxon>Pongo</taxon>
    </lineage>
</organism>
<evidence type="ECO:0000250" key="1">
    <source>
        <dbReference type="UniProtKB" id="P97855"/>
    </source>
</evidence>
<evidence type="ECO:0000250" key="2">
    <source>
        <dbReference type="UniProtKB" id="Q13283"/>
    </source>
</evidence>
<evidence type="ECO:0000255" key="3">
    <source>
        <dbReference type="PROSITE-ProRule" id="PRU00137"/>
    </source>
</evidence>
<evidence type="ECO:0000255" key="4">
    <source>
        <dbReference type="PROSITE-ProRule" id="PRU00176"/>
    </source>
</evidence>
<evidence type="ECO:0000256" key="5">
    <source>
        <dbReference type="SAM" id="MobiDB-lite"/>
    </source>
</evidence>
<evidence type="ECO:0000305" key="6"/>
<name>G3BP1_PONAB</name>
<gene>
    <name type="primary">G3BP1</name>
    <name type="synonym">G3BP</name>
</gene>
<comment type="function">
    <text evidence="2">Protein involved in various processes, such as stress granule formation and innate immunity. Plays an essential role in stress granule formation. Stress granules are membraneless compartments that store mRNAs and proteins, such as stalled translation pre-initiation complexes, in response to stress. Promotes formation of stress granules phase-separated membraneless compartment by undergoing liquid-liquid phase separation (LLPS) upon unfolded RNA-binding: functions as a molecular switch that triggers RNA-dependent LLPS in response to a rise in intracellular free RNA concentrations. Also acts as an ATP- and magnesium-dependent helicase: unwinds DNA/DNA, RNA/DNA, and RNA/RNA substrates with comparable efficiency. Acts unidirectionally by moving in the 5' to 3' direction along the bound single-stranded DNA. Unwinds preferentially partial DNA and RNA duplexes having a 17 bp annealed portion and either a hanging 3' tail or hanging tails at both 5'- and 3'-ends. Plays an essential role in innate immunity by promoting CGAS and RIGI activity. Participates in the DNA-triggered cGAS/STING pathway by promoting the DNA binding and activation of CGAS. Triggers the condensation of cGAS, a process probably linked to the formation of membrane-less organelles. Also enhances RIGI-induced type I interferon production probably by helping RIGI at sensing pathogenic RNA. May also act as a phosphorylation-dependent sequence-specific endoribonuclease in vitro: Cleaves exclusively between cytosine and adenine and cleaves MYC mRNA preferentially at the 3'-UTR.</text>
</comment>
<comment type="catalytic activity">
    <reaction evidence="2">
        <text>ATP + H2O = ADP + phosphate + H(+)</text>
        <dbReference type="Rhea" id="RHEA:13065"/>
        <dbReference type="ChEBI" id="CHEBI:15377"/>
        <dbReference type="ChEBI" id="CHEBI:15378"/>
        <dbReference type="ChEBI" id="CHEBI:30616"/>
        <dbReference type="ChEBI" id="CHEBI:43474"/>
        <dbReference type="ChEBI" id="CHEBI:456216"/>
        <dbReference type="EC" id="3.6.4.12"/>
    </reaction>
</comment>
<comment type="catalytic activity">
    <reaction evidence="2">
        <text>ATP + H2O = ADP + phosphate + H(+)</text>
        <dbReference type="Rhea" id="RHEA:13065"/>
        <dbReference type="ChEBI" id="CHEBI:15377"/>
        <dbReference type="ChEBI" id="CHEBI:15378"/>
        <dbReference type="ChEBI" id="CHEBI:30616"/>
        <dbReference type="ChEBI" id="CHEBI:43474"/>
        <dbReference type="ChEBI" id="CHEBI:456216"/>
        <dbReference type="EC" id="3.6.4.13"/>
    </reaction>
</comment>
<comment type="cofactor">
    <cofactor evidence="2">
        <name>Mg(2+)</name>
        <dbReference type="ChEBI" id="CHEBI:18420"/>
    </cofactor>
    <text evidence="2">Mg(2+) is required for helicase activity.</text>
</comment>
<comment type="activity regulation">
    <text evidence="2">Under physiological conditions, G3BP1 adopts a compact state that is stabilized by intramolecular interactions between the RG-rich and the acidic regions that inhibit phase separation. Upon stress, polysomes disassemble and mRNAs are released in an unfolded protein-free state. Binding of unfolded mRNA to G3BP1 outcompetes the intramolecular interactions and RNA-bound G3BP1 adopts an expanded conformation in which the RG-rich region becomes exposed to engage in protein-protein and protein-RNA interactions, allowing physical cross-linking of RNA molecules to form protein-RNA condensates, leading to liquid-liquid phase separation (LLPS).</text>
</comment>
<comment type="subunit">
    <text evidence="1 2">Homodimer and oligomer. Component of a TAU mRNP complex, at least composed of IGF2BP1, ELAVL4 and G3BP1. Binds to the SH3 domain of Ras GTPase-activating protein (RASA1) in proliferating cells. No interaction in quiescent cells. Interacts (via NTF2 domain) with USP10; inhibiting stress granule formation by lowering G3BP1 valence. Interacts (via NTF2 domain) with CAPRIN1; promoting stress granule formation by lowering the saturation-concentration of G3BP1. Interacts (via NTF2 domain) with UBAP2L; promoting stress granule formation. Associates (via RG-rich region) with 40S ribosome subunits. Interacts with RPTOR and SPAG5; this complex is increased by oxidative stress. Interacts with ATXN2L. Interacts with STYXL1. Interacts with CGAS (via N-terminus); this interaction promotes the DNA-binding and activation of CGAS. Interacts (via C-terminus) with RIGI. Interacts with PABPC1. Interacts with QKI (isoforms QKI6 and QKI7); directing N(7)-methylguanine-containing mRNAs to stress granules.</text>
</comment>
<comment type="subcellular location">
    <subcellularLocation>
        <location evidence="1">Cytoplasm</location>
        <location evidence="1">Cytosol</location>
    </subcellularLocation>
    <subcellularLocation>
        <location evidence="1">Perikaryon</location>
    </subcellularLocation>
    <subcellularLocation>
        <location evidence="2">Cytoplasm</location>
        <location evidence="2">Stress granule</location>
    </subcellularLocation>
    <subcellularLocation>
        <location evidence="2">Nucleus</location>
    </subcellularLocation>
    <text evidence="2">Cytoplasmic in proliferating cells, can be recruited to the plasma membrane in exponentially growing cells. Cytosolic and partially nuclear in resting cells. Recruited to stress granules in response to arsenite treatment. The unphosphorylated form is recruited to stress granules. HRAS signaling contributes to this process by regulating G3BP dephosphorylation.</text>
</comment>
<comment type="domain">
    <text evidence="2">Can mediate both protein-protein and protein-RNA interactions via the NTF2 domain and RNA-binding domain RRM; protein-protein and protein-RNA interactions are essential for undergoing liquid-liquid phase separation (LLPS).</text>
</comment>
<comment type="domain">
    <text evidence="2">The acidic disordered region acts as a negative regulator of phase separation.</text>
</comment>
<comment type="domain">
    <text evidence="2">The NTF2 domain mediates interaction with CAPRIN1 and USP10 regulators, thereby regulating assembly of stress granules.</text>
</comment>
<comment type="PTM">
    <text evidence="2">Phosphorylation of the acidic disordered region regulates stress granule assembly. RASA1-dependent phosphorylation of Ser-149 induces a conformational change that prevents self-association. Dephosphorylation after HRAS activation is required for stress granule assembly. Ser-149 phosphorylation induces partial nuclear localization.</text>
</comment>
<comment type="PTM">
    <text evidence="2">Arg-435 is dimethylated, probably to asymmetric dimethylarginine.</text>
</comment>
<comment type="PTM">
    <text evidence="2">Ubiquitinated by TRIM21 via 'Lys-63'-linked polyubiquitination in the NTF2 domain in response to heat shock, leading to stress granule disassembly: ubiquitination promotes interaction with the FAF2 adapter, followed by interaction with VCP, which extracts G3BP1 from stress granules, leading to stress granule disassembly. In case of prolonged stress, ubiquitination by TRIM21 leads to autophagy-dependent degradation of G3BP1 via recruitment of ubiquitinated G3BP1 by SQSTM1 and/or CALCOCO2 to autophagosomes.</text>
</comment>
<accession>Q5RB87</accession>
<accession>Q5RBE0</accession>
<protein>
    <recommendedName>
        <fullName>Ras GTPase-activating protein-binding protein 1</fullName>
        <shortName>G3BP-1</shortName>
        <ecNumber evidence="2">3.6.4.12</ecNumber>
        <ecNumber evidence="2">3.6.4.13</ecNumber>
    </recommendedName>
    <alternativeName>
        <fullName>ATP-dependent DNA/RNA helicase G3BP</fullName>
    </alternativeName>
</protein>
<keyword id="KW-0007">Acetylation</keyword>
<keyword id="KW-0067">ATP-binding</keyword>
<keyword id="KW-0963">Cytoplasm</keyword>
<keyword id="KW-0238">DNA-binding</keyword>
<keyword id="KW-0255">Endonuclease</keyword>
<keyword id="KW-0347">Helicase</keyword>
<keyword id="KW-0378">Hydrolase</keyword>
<keyword id="KW-0391">Immunity</keyword>
<keyword id="KW-0399">Innate immunity</keyword>
<keyword id="KW-1017">Isopeptide bond</keyword>
<keyword id="KW-0488">Methylation</keyword>
<keyword id="KW-0540">Nuclease</keyword>
<keyword id="KW-0547">Nucleotide-binding</keyword>
<keyword id="KW-0539">Nucleus</keyword>
<keyword id="KW-0597">Phosphoprotein</keyword>
<keyword id="KW-1185">Reference proteome</keyword>
<keyword id="KW-0694">RNA-binding</keyword>
<keyword id="KW-0813">Transport</keyword>
<keyword id="KW-0832">Ubl conjugation</keyword>
<sequence>MVMEKPSPLLVGREFVRQYYTLLNQAPDMLHRFYGKNSSYVHGGLDSNGKPADAVYGQKEIHRKVMSQNFTNCHTKIRHVDAHATLNDGVVVQVMGLLSNNNQALRRFMQTFVLAPEGSVANKFYVHNDIFRYQDEVFGGFVTEPQEESEEEVEEPEERQQTPEVVPDDSGTFYDQAVVSNDMEEHLEEPVAEPEPDPEPEPEQEPVSEIQEEKPEPVLEETVPEDAQKSSSPAPADIAQTVQEDLRTFSWASVTSKNLPPSGAVPVTGIPPHVVKVPASQPRPESKPESQIPPQRPQRDQRVREQRINIPPQRGPRPIREAGEQGDIEPRRMVRHPDSHQLFIGNLPHEVDKSELKDFFQSYGNVVELRINSGGKLPNFGFVVFDDSEPVQKVLSNRPIMFRGEVRLNVEEKKTRAAREGDRRDNRLRGPGGPRGGLGGGMRGPPRGGMVQKPGFGVGRGLAPRQ</sequence>
<feature type="chain" id="PRO_0000271371" description="Ras GTPase-activating protein-binding protein 1">
    <location>
        <begin position="1"/>
        <end position="466"/>
    </location>
</feature>
<feature type="domain" description="NTF2" evidence="3">
    <location>
        <begin position="11"/>
        <end position="133"/>
    </location>
</feature>
<feature type="domain" description="RRM" evidence="4">
    <location>
        <begin position="340"/>
        <end position="415"/>
    </location>
</feature>
<feature type="region of interest" description="Acidic disordered region" evidence="2">
    <location>
        <begin position="142"/>
        <end position="225"/>
    </location>
</feature>
<feature type="region of interest" description="Disordered" evidence="5">
    <location>
        <begin position="144"/>
        <end position="172"/>
    </location>
</feature>
<feature type="region of interest" description="Disordered" evidence="5">
    <location>
        <begin position="184"/>
        <end position="243"/>
    </location>
</feature>
<feature type="region of interest" description="Disordered" evidence="5">
    <location>
        <begin position="255"/>
        <end position="329"/>
    </location>
</feature>
<feature type="region of interest" description="RG-rich region" evidence="2">
    <location>
        <begin position="410"/>
        <end position="466"/>
    </location>
</feature>
<feature type="region of interest" description="Disordered" evidence="5">
    <location>
        <begin position="413"/>
        <end position="466"/>
    </location>
</feature>
<feature type="compositionally biased region" description="Acidic residues" evidence="5">
    <location>
        <begin position="145"/>
        <end position="157"/>
    </location>
</feature>
<feature type="compositionally biased region" description="Acidic residues" evidence="5">
    <location>
        <begin position="185"/>
        <end position="206"/>
    </location>
</feature>
<feature type="compositionally biased region" description="Basic and acidic residues" evidence="5">
    <location>
        <begin position="297"/>
        <end position="307"/>
    </location>
</feature>
<feature type="compositionally biased region" description="Basic and acidic residues" evidence="5">
    <location>
        <begin position="318"/>
        <end position="329"/>
    </location>
</feature>
<feature type="compositionally biased region" description="Basic and acidic residues" evidence="5">
    <location>
        <begin position="413"/>
        <end position="428"/>
    </location>
</feature>
<feature type="compositionally biased region" description="Gly residues" evidence="5">
    <location>
        <begin position="430"/>
        <end position="447"/>
    </location>
</feature>
<feature type="modified residue" description="Phosphothreonine" evidence="2">
    <location>
        <position position="143"/>
    </location>
</feature>
<feature type="modified residue" description="Phosphoserine" evidence="2">
    <location>
        <position position="149"/>
    </location>
</feature>
<feature type="modified residue" description="Phosphoserine" evidence="2">
    <location>
        <position position="231"/>
    </location>
</feature>
<feature type="modified residue" description="Phosphoserine" evidence="2">
    <location>
        <position position="232"/>
    </location>
</feature>
<feature type="modified residue" description="Phosphoserine" evidence="2">
    <location>
        <position position="250"/>
    </location>
</feature>
<feature type="modified residue" description="Phosphoserine" evidence="2">
    <location>
        <position position="253"/>
    </location>
</feature>
<feature type="modified residue" description="Phosphoserine" evidence="2">
    <location>
        <position position="373"/>
    </location>
</feature>
<feature type="modified residue" description="N6-acetyllysine; alternate" evidence="2">
    <location>
        <position position="376"/>
    </location>
</feature>
<feature type="modified residue" description="Asymmetric dimethylarginine" evidence="2">
    <location>
        <position position="429"/>
    </location>
</feature>
<feature type="modified residue" description="Asymmetric dimethylarginine; alternate" evidence="2">
    <location>
        <position position="435"/>
    </location>
</feature>
<feature type="modified residue" description="Omega-N-methylarginine; alternate" evidence="2">
    <location>
        <position position="435"/>
    </location>
</feature>
<feature type="modified residue" description="Omega-N-methylarginine; alternate" evidence="1">
    <location>
        <position position="447"/>
    </location>
</feature>
<feature type="modified residue" description="Dimethylated arginine; alternate" evidence="2">
    <location>
        <position position="460"/>
    </location>
</feature>
<feature type="modified residue" description="Omega-N-methylarginine; alternate" evidence="2">
    <location>
        <position position="460"/>
    </location>
</feature>
<feature type="modified residue" description="Omega-N-methylarginine; alternate" evidence="2">
    <location>
        <position position="465"/>
    </location>
</feature>
<feature type="cross-link" description="Glycyl lysine isopeptide (Lys-Gly) (interchain with G-Cter in ubiquitin)" evidence="2">
    <location>
        <position position="36"/>
    </location>
</feature>
<feature type="cross-link" description="Glycyl lysine isopeptide (Lys-Gly) (interchain with G-Cter in ubiquitin)" evidence="2">
    <location>
        <position position="50"/>
    </location>
</feature>
<feature type="cross-link" description="Glycyl lysine isopeptide (Lys-Gly) (interchain with G-Cter in ubiquitin)" evidence="2">
    <location>
        <position position="59"/>
    </location>
</feature>
<feature type="cross-link" description="Glycyl lysine isopeptide (Lys-Gly) (interchain with G-Cter in ubiquitin)" evidence="2">
    <location>
        <position position="64"/>
    </location>
</feature>
<feature type="cross-link" description="Glycyl lysine isopeptide (Lys-Gly) (interchain with G-Cter in ubiquitin)" evidence="2">
    <location>
        <position position="76"/>
    </location>
</feature>
<feature type="cross-link" description="Glycyl lysine isopeptide (Lys-Gly) (interchain with G-Cter in ubiquitin)" evidence="2">
    <location>
        <position position="123"/>
    </location>
</feature>
<feature type="cross-link" description="Glycyl lysine isopeptide (Lys-Gly) (interchain with G-Cter in ubiquitin)" evidence="2">
    <location>
        <position position="353"/>
    </location>
</feature>
<feature type="cross-link" description="Glycyl lysine isopeptide (Lys-Gly) (interchain with G-Cter in ubiquitin)" evidence="2">
    <location>
        <position position="357"/>
    </location>
</feature>
<feature type="cross-link" description="Glycyl lysine isopeptide (Lys-Gly) (interchain with G-Cter in SUMO2); alternate" evidence="2">
    <location>
        <position position="376"/>
    </location>
</feature>
<feature type="cross-link" description="Glycyl lysine isopeptide (Lys-Gly) (interchain with G-Cter in ubiquitin)" evidence="2">
    <location>
        <position position="376"/>
    </location>
</feature>
<feature type="cross-link" description="Glycyl lysine isopeptide (Lys-Gly) (interchain with G-Cter in ubiquitin); alternate" evidence="2">
    <location>
        <position position="393"/>
    </location>
</feature>
<feature type="sequence conflict" description="In Ref. 1; CAH90920." evidence="6" ref="1">
    <original>I</original>
    <variation>V</variation>
    <location>
        <position position="319"/>
    </location>
</feature>
<dbReference type="EC" id="3.6.4.12" evidence="2"/>
<dbReference type="EC" id="3.6.4.13" evidence="2"/>
<dbReference type="EMBL" id="CR858711">
    <property type="protein sequence ID" value="CAH90920.1"/>
    <property type="molecule type" value="mRNA"/>
</dbReference>
<dbReference type="EMBL" id="CR858766">
    <property type="protein sequence ID" value="CAH90973.1"/>
    <property type="molecule type" value="mRNA"/>
</dbReference>
<dbReference type="RefSeq" id="NP_001125562.1">
    <property type="nucleotide sequence ID" value="NM_001132090.1"/>
</dbReference>
<dbReference type="RefSeq" id="XP_009239479.1">
    <property type="nucleotide sequence ID" value="XM_009241204.4"/>
</dbReference>
<dbReference type="RefSeq" id="XP_009239480.1">
    <property type="nucleotide sequence ID" value="XM_009241205.4"/>
</dbReference>
<dbReference type="RefSeq" id="XP_009239481.1">
    <property type="nucleotide sequence ID" value="XM_009241206.4"/>
</dbReference>
<dbReference type="RefSeq" id="XP_024102428.1">
    <property type="nucleotide sequence ID" value="XM_024246660.3"/>
</dbReference>
<dbReference type="RefSeq" id="XP_063579949.1">
    <property type="nucleotide sequence ID" value="XM_063723879.1"/>
</dbReference>
<dbReference type="SMR" id="Q5RB87"/>
<dbReference type="FunCoup" id="Q5RB87">
    <property type="interactions" value="3075"/>
</dbReference>
<dbReference type="STRING" id="9601.ENSPPYP00000017869"/>
<dbReference type="Ensembl" id="ENSPPYT00000018585.2">
    <property type="protein sequence ID" value="ENSPPYP00000017869.1"/>
    <property type="gene ID" value="ENSPPYG00000015968.2"/>
</dbReference>
<dbReference type="GeneID" id="100172476"/>
<dbReference type="KEGG" id="pon:100172476"/>
<dbReference type="CTD" id="10146"/>
<dbReference type="eggNOG" id="KOG0116">
    <property type="taxonomic scope" value="Eukaryota"/>
</dbReference>
<dbReference type="GeneTree" id="ENSGT00390000011365"/>
<dbReference type="HOGENOM" id="CLU_022209_0_2_1"/>
<dbReference type="InParanoid" id="Q5RB87"/>
<dbReference type="OMA" id="RCKGPQG"/>
<dbReference type="OrthoDB" id="339151at2759"/>
<dbReference type="TreeFam" id="TF325464"/>
<dbReference type="Proteomes" id="UP000001595">
    <property type="component" value="Chromosome 5"/>
</dbReference>
<dbReference type="GO" id="GO:0010494">
    <property type="term" value="C:cytoplasmic stress granule"/>
    <property type="evidence" value="ECO:0000250"/>
    <property type="project" value="UniProtKB"/>
</dbReference>
<dbReference type="GO" id="GO:0005829">
    <property type="term" value="C:cytosol"/>
    <property type="evidence" value="ECO:0007669"/>
    <property type="project" value="UniProtKB-SubCell"/>
</dbReference>
<dbReference type="GO" id="GO:0005634">
    <property type="term" value="C:nucleus"/>
    <property type="evidence" value="ECO:0007669"/>
    <property type="project" value="UniProtKB-SubCell"/>
</dbReference>
<dbReference type="GO" id="GO:0043204">
    <property type="term" value="C:perikaryon"/>
    <property type="evidence" value="ECO:0007669"/>
    <property type="project" value="UniProtKB-SubCell"/>
</dbReference>
<dbReference type="GO" id="GO:1990904">
    <property type="term" value="C:ribonucleoprotein complex"/>
    <property type="evidence" value="ECO:0007669"/>
    <property type="project" value="TreeGrafter"/>
</dbReference>
<dbReference type="GO" id="GO:0005524">
    <property type="term" value="F:ATP binding"/>
    <property type="evidence" value="ECO:0007669"/>
    <property type="project" value="UniProtKB-KW"/>
</dbReference>
<dbReference type="GO" id="GO:0016887">
    <property type="term" value="F:ATP hydrolysis activity"/>
    <property type="evidence" value="ECO:0007669"/>
    <property type="project" value="RHEA"/>
</dbReference>
<dbReference type="GO" id="GO:0003677">
    <property type="term" value="F:DNA binding"/>
    <property type="evidence" value="ECO:0007669"/>
    <property type="project" value="UniProtKB-KW"/>
</dbReference>
<dbReference type="GO" id="GO:0003678">
    <property type="term" value="F:DNA helicase activity"/>
    <property type="evidence" value="ECO:0007669"/>
    <property type="project" value="Ensembl"/>
</dbReference>
<dbReference type="GO" id="GO:0033677">
    <property type="term" value="F:DNA/RNA helicase activity"/>
    <property type="evidence" value="ECO:0007669"/>
    <property type="project" value="Ensembl"/>
</dbReference>
<dbReference type="GO" id="GO:0004519">
    <property type="term" value="F:endonuclease activity"/>
    <property type="evidence" value="ECO:0007669"/>
    <property type="project" value="UniProtKB-KW"/>
</dbReference>
<dbReference type="GO" id="GO:0140693">
    <property type="term" value="F:molecular condensate scaffold activity"/>
    <property type="evidence" value="ECO:0000250"/>
    <property type="project" value="UniProtKB"/>
</dbReference>
<dbReference type="GO" id="GO:0003729">
    <property type="term" value="F:mRNA binding"/>
    <property type="evidence" value="ECO:0007669"/>
    <property type="project" value="Ensembl"/>
</dbReference>
<dbReference type="GO" id="GO:0043024">
    <property type="term" value="F:ribosomal small subunit binding"/>
    <property type="evidence" value="ECO:0000250"/>
    <property type="project" value="UniProtKB"/>
</dbReference>
<dbReference type="GO" id="GO:0003724">
    <property type="term" value="F:RNA helicase activity"/>
    <property type="evidence" value="ECO:0007669"/>
    <property type="project" value="UniProtKB-EC"/>
</dbReference>
<dbReference type="GO" id="GO:0051607">
    <property type="term" value="P:defense response to virus"/>
    <property type="evidence" value="ECO:0007669"/>
    <property type="project" value="Ensembl"/>
</dbReference>
<dbReference type="GO" id="GO:0045087">
    <property type="term" value="P:innate immune response"/>
    <property type="evidence" value="ECO:0007669"/>
    <property type="project" value="UniProtKB-KW"/>
</dbReference>
<dbReference type="GO" id="GO:0090090">
    <property type="term" value="P:negative regulation of canonical Wnt signaling pathway"/>
    <property type="evidence" value="ECO:0007669"/>
    <property type="project" value="Ensembl"/>
</dbReference>
<dbReference type="GO" id="GO:0032481">
    <property type="term" value="P:positive regulation of type I interferon production"/>
    <property type="evidence" value="ECO:0007669"/>
    <property type="project" value="Ensembl"/>
</dbReference>
<dbReference type="GO" id="GO:0034063">
    <property type="term" value="P:stress granule assembly"/>
    <property type="evidence" value="ECO:0000250"/>
    <property type="project" value="UniProtKB"/>
</dbReference>
<dbReference type="CDD" id="cd00780">
    <property type="entry name" value="NTF2"/>
    <property type="match status" value="1"/>
</dbReference>
<dbReference type="CDD" id="cd12463">
    <property type="entry name" value="RRM_G3BP1"/>
    <property type="match status" value="1"/>
</dbReference>
<dbReference type="FunFam" id="3.30.70.330:FF:000266">
    <property type="entry name" value="Ras GTPase-activating protein-binding protein 1"/>
    <property type="match status" value="1"/>
</dbReference>
<dbReference type="FunFam" id="3.10.450.50:FF:000002">
    <property type="entry name" value="Ras GTPase-activating protein-binding protein 2 isoform 1"/>
    <property type="match status" value="1"/>
</dbReference>
<dbReference type="Gene3D" id="3.10.450.50">
    <property type="match status" value="1"/>
</dbReference>
<dbReference type="Gene3D" id="3.30.70.330">
    <property type="match status" value="1"/>
</dbReference>
<dbReference type="InterPro" id="IPR034374">
    <property type="entry name" value="G3BP1_RRM"/>
</dbReference>
<dbReference type="InterPro" id="IPR032710">
    <property type="entry name" value="NTF2-like_dom_sf"/>
</dbReference>
<dbReference type="InterPro" id="IPR002075">
    <property type="entry name" value="NTF2_dom"/>
</dbReference>
<dbReference type="InterPro" id="IPR018222">
    <property type="entry name" value="Nuclear_transport_factor_2_euk"/>
</dbReference>
<dbReference type="InterPro" id="IPR012677">
    <property type="entry name" value="Nucleotide-bd_a/b_plait_sf"/>
</dbReference>
<dbReference type="InterPro" id="IPR039539">
    <property type="entry name" value="Ras_GTPase_bind_prot"/>
</dbReference>
<dbReference type="InterPro" id="IPR035979">
    <property type="entry name" value="RBD_domain_sf"/>
</dbReference>
<dbReference type="InterPro" id="IPR000504">
    <property type="entry name" value="RRM_dom"/>
</dbReference>
<dbReference type="PANTHER" id="PTHR10693">
    <property type="entry name" value="RAS GTPASE-ACTIVATING PROTEIN-BINDING PROTEIN"/>
    <property type="match status" value="1"/>
</dbReference>
<dbReference type="PANTHER" id="PTHR10693:SF21">
    <property type="entry name" value="RAS GTPASE-ACTIVATING PROTEIN-BINDING PROTEIN 1"/>
    <property type="match status" value="1"/>
</dbReference>
<dbReference type="Pfam" id="PF02136">
    <property type="entry name" value="NTF2"/>
    <property type="match status" value="1"/>
</dbReference>
<dbReference type="Pfam" id="PF00076">
    <property type="entry name" value="RRM_1"/>
    <property type="match status" value="1"/>
</dbReference>
<dbReference type="SMART" id="SM00360">
    <property type="entry name" value="RRM"/>
    <property type="match status" value="1"/>
</dbReference>
<dbReference type="SUPFAM" id="SSF54427">
    <property type="entry name" value="NTF2-like"/>
    <property type="match status" value="1"/>
</dbReference>
<dbReference type="SUPFAM" id="SSF54928">
    <property type="entry name" value="RNA-binding domain, RBD"/>
    <property type="match status" value="1"/>
</dbReference>
<dbReference type="PROSITE" id="PS50177">
    <property type="entry name" value="NTF2_DOMAIN"/>
    <property type="match status" value="1"/>
</dbReference>
<dbReference type="PROSITE" id="PS50102">
    <property type="entry name" value="RRM"/>
    <property type="match status" value="1"/>
</dbReference>
<proteinExistence type="evidence at transcript level"/>